<sequence>MAKKKKKVDENNQVLATNRKARHDYQILDTWEAGVVLLGTEIKSLREGKASLVDAFAVIDNGEVWLHNLHIPTYSMGSWTNHSPKRTRKLLLHRREIDSLMGKVRDGNRTLVPLKLYLVNGRVKLELGLAQGKQDYDKRQDIKRRTEEREVTRELGRRIKGINA</sequence>
<protein>
    <recommendedName>
        <fullName evidence="1">SsrA-binding protein</fullName>
    </recommendedName>
    <alternativeName>
        <fullName evidence="1">Small protein B</fullName>
    </alternativeName>
</protein>
<gene>
    <name evidence="1" type="primary">smpB</name>
    <name type="ordered locus">CE0814</name>
</gene>
<proteinExistence type="inferred from homology"/>
<dbReference type="EMBL" id="BA000035">
    <property type="protein sequence ID" value="BAC17624.1"/>
    <property type="molecule type" value="Genomic_DNA"/>
</dbReference>
<dbReference type="RefSeq" id="WP_006769503.1">
    <property type="nucleotide sequence ID" value="NC_004369.1"/>
</dbReference>
<dbReference type="SMR" id="Q8FRE7"/>
<dbReference type="STRING" id="196164.gene:10741218"/>
<dbReference type="KEGG" id="cef:CE0814"/>
<dbReference type="eggNOG" id="COG0691">
    <property type="taxonomic scope" value="Bacteria"/>
</dbReference>
<dbReference type="HOGENOM" id="CLU_108953_2_1_11"/>
<dbReference type="OrthoDB" id="9805462at2"/>
<dbReference type="Proteomes" id="UP000001409">
    <property type="component" value="Chromosome"/>
</dbReference>
<dbReference type="GO" id="GO:0005829">
    <property type="term" value="C:cytosol"/>
    <property type="evidence" value="ECO:0007669"/>
    <property type="project" value="TreeGrafter"/>
</dbReference>
<dbReference type="GO" id="GO:0003723">
    <property type="term" value="F:RNA binding"/>
    <property type="evidence" value="ECO:0007669"/>
    <property type="project" value="UniProtKB-UniRule"/>
</dbReference>
<dbReference type="GO" id="GO:0070929">
    <property type="term" value="P:trans-translation"/>
    <property type="evidence" value="ECO:0007669"/>
    <property type="project" value="UniProtKB-UniRule"/>
</dbReference>
<dbReference type="CDD" id="cd09294">
    <property type="entry name" value="SmpB"/>
    <property type="match status" value="1"/>
</dbReference>
<dbReference type="Gene3D" id="2.40.280.10">
    <property type="match status" value="1"/>
</dbReference>
<dbReference type="HAMAP" id="MF_00023">
    <property type="entry name" value="SmpB"/>
    <property type="match status" value="1"/>
</dbReference>
<dbReference type="InterPro" id="IPR023620">
    <property type="entry name" value="SmpB"/>
</dbReference>
<dbReference type="InterPro" id="IPR000037">
    <property type="entry name" value="SsrA-bd_prot"/>
</dbReference>
<dbReference type="InterPro" id="IPR020081">
    <property type="entry name" value="SsrA-bd_prot_CS"/>
</dbReference>
<dbReference type="NCBIfam" id="NF003843">
    <property type="entry name" value="PRK05422.1"/>
    <property type="match status" value="1"/>
</dbReference>
<dbReference type="NCBIfam" id="TIGR00086">
    <property type="entry name" value="smpB"/>
    <property type="match status" value="1"/>
</dbReference>
<dbReference type="PANTHER" id="PTHR30308:SF2">
    <property type="entry name" value="SSRA-BINDING PROTEIN"/>
    <property type="match status" value="1"/>
</dbReference>
<dbReference type="PANTHER" id="PTHR30308">
    <property type="entry name" value="TMRNA-BINDING COMPONENT OF TRANS-TRANSLATION TAGGING COMPLEX"/>
    <property type="match status" value="1"/>
</dbReference>
<dbReference type="Pfam" id="PF01668">
    <property type="entry name" value="SmpB"/>
    <property type="match status" value="1"/>
</dbReference>
<dbReference type="SUPFAM" id="SSF74982">
    <property type="entry name" value="Small protein B (SmpB)"/>
    <property type="match status" value="1"/>
</dbReference>
<dbReference type="PROSITE" id="PS01317">
    <property type="entry name" value="SSRP"/>
    <property type="match status" value="1"/>
</dbReference>
<keyword id="KW-0963">Cytoplasm</keyword>
<keyword id="KW-1185">Reference proteome</keyword>
<keyword id="KW-0694">RNA-binding</keyword>
<organism>
    <name type="scientific">Corynebacterium efficiens (strain DSM 44549 / YS-314 / AJ 12310 / JCM 11189 / NBRC 100395)</name>
    <dbReference type="NCBI Taxonomy" id="196164"/>
    <lineage>
        <taxon>Bacteria</taxon>
        <taxon>Bacillati</taxon>
        <taxon>Actinomycetota</taxon>
        <taxon>Actinomycetes</taxon>
        <taxon>Mycobacteriales</taxon>
        <taxon>Corynebacteriaceae</taxon>
        <taxon>Corynebacterium</taxon>
    </lineage>
</organism>
<accession>Q8FRE7</accession>
<name>SSRP_COREF</name>
<comment type="function">
    <text evidence="1">Required for rescue of stalled ribosomes mediated by trans-translation. Binds to transfer-messenger RNA (tmRNA), required for stable association of tmRNA with ribosomes. tmRNA and SmpB together mimic tRNA shape, replacing the anticodon stem-loop with SmpB. tmRNA is encoded by the ssrA gene; the 2 termini fold to resemble tRNA(Ala) and it encodes a 'tag peptide', a short internal open reading frame. During trans-translation Ala-aminoacylated tmRNA acts like a tRNA, entering the A-site of stalled ribosomes, displacing the stalled mRNA. The ribosome then switches to translate the ORF on the tmRNA; the nascent peptide is terminated with the 'tag peptide' encoded by the tmRNA and targeted for degradation. The ribosome is freed to recommence translation, which seems to be the essential function of trans-translation.</text>
</comment>
<comment type="subcellular location">
    <subcellularLocation>
        <location evidence="1">Cytoplasm</location>
    </subcellularLocation>
    <text evidence="1">The tmRNA-SmpB complex associates with stalled 70S ribosomes.</text>
</comment>
<comment type="similarity">
    <text evidence="1">Belongs to the SmpB family.</text>
</comment>
<feature type="chain" id="PRO_0000102938" description="SsrA-binding protein">
    <location>
        <begin position="1"/>
        <end position="164"/>
    </location>
</feature>
<evidence type="ECO:0000255" key="1">
    <source>
        <dbReference type="HAMAP-Rule" id="MF_00023"/>
    </source>
</evidence>
<reference key="1">
    <citation type="journal article" date="2003" name="Genome Res.">
        <title>Comparative complete genome sequence analysis of the amino acid replacements responsible for the thermostability of Corynebacterium efficiens.</title>
        <authorList>
            <person name="Nishio Y."/>
            <person name="Nakamura Y."/>
            <person name="Kawarabayasi Y."/>
            <person name="Usuda Y."/>
            <person name="Kimura E."/>
            <person name="Sugimoto S."/>
            <person name="Matsui K."/>
            <person name="Yamagishi A."/>
            <person name="Kikuchi H."/>
            <person name="Ikeo K."/>
            <person name="Gojobori T."/>
        </authorList>
    </citation>
    <scope>NUCLEOTIDE SEQUENCE [LARGE SCALE GENOMIC DNA]</scope>
    <source>
        <strain>DSM 44549 / YS-314 / AJ 12310 / JCM 11189 / NBRC 100395</strain>
    </source>
</reference>